<comment type="function">
    <text evidence="1">Catalyzes the transfer of a phosphate group to glutamate to form L-glutamate 5-phosphate.</text>
</comment>
<comment type="catalytic activity">
    <reaction evidence="1">
        <text>L-glutamate + ATP = L-glutamyl 5-phosphate + ADP</text>
        <dbReference type="Rhea" id="RHEA:14877"/>
        <dbReference type="ChEBI" id="CHEBI:29985"/>
        <dbReference type="ChEBI" id="CHEBI:30616"/>
        <dbReference type="ChEBI" id="CHEBI:58274"/>
        <dbReference type="ChEBI" id="CHEBI:456216"/>
        <dbReference type="EC" id="2.7.2.11"/>
    </reaction>
</comment>
<comment type="pathway">
    <text evidence="1">Amino-acid biosynthesis; L-proline biosynthesis; L-glutamate 5-semialdehyde from L-glutamate: step 1/2.</text>
</comment>
<comment type="subcellular location">
    <subcellularLocation>
        <location evidence="1">Cytoplasm</location>
    </subcellularLocation>
</comment>
<comment type="similarity">
    <text evidence="1">Belongs to the glutamate 5-kinase family.</text>
</comment>
<gene>
    <name evidence="1" type="primary">proB</name>
    <name type="ordered locus">BCAN_A1882</name>
</gene>
<keyword id="KW-0028">Amino-acid biosynthesis</keyword>
<keyword id="KW-0067">ATP-binding</keyword>
<keyword id="KW-0963">Cytoplasm</keyword>
<keyword id="KW-0418">Kinase</keyword>
<keyword id="KW-0547">Nucleotide-binding</keyword>
<keyword id="KW-0641">Proline biosynthesis</keyword>
<keyword id="KW-1185">Reference proteome</keyword>
<keyword id="KW-0808">Transferase</keyword>
<feature type="chain" id="PRO_1000081038" description="Glutamate 5-kinase">
    <location>
        <begin position="1"/>
        <end position="378"/>
    </location>
</feature>
<feature type="domain" description="PUA" evidence="1">
    <location>
        <begin position="279"/>
        <end position="356"/>
    </location>
</feature>
<feature type="binding site" evidence="1">
    <location>
        <position position="14"/>
    </location>
    <ligand>
        <name>ATP</name>
        <dbReference type="ChEBI" id="CHEBI:30616"/>
    </ligand>
</feature>
<feature type="binding site" evidence="1">
    <location>
        <position position="54"/>
    </location>
    <ligand>
        <name>substrate</name>
    </ligand>
</feature>
<feature type="binding site" evidence="1">
    <location>
        <position position="141"/>
    </location>
    <ligand>
        <name>substrate</name>
    </ligand>
</feature>
<feature type="binding site" evidence="1">
    <location>
        <position position="153"/>
    </location>
    <ligand>
        <name>substrate</name>
    </ligand>
</feature>
<feature type="binding site" evidence="1">
    <location>
        <begin position="173"/>
        <end position="174"/>
    </location>
    <ligand>
        <name>ATP</name>
        <dbReference type="ChEBI" id="CHEBI:30616"/>
    </ligand>
</feature>
<proteinExistence type="inferred from homology"/>
<sequence>MLKKLKDYRRIVVKIGSALLVDRATGLKREWLESLGQDIAALQHAGVEVLVVSSGAIALGRTVLGLPKKALKLEESQAAAAAGQIALAKAYADVLGGHGIKSGQILVTLSDTEERRRYLNARATIETLLKLKAVPIINENDTVATTEIRYGDNDRLAARVATMMGADLLILLSDIDGLYTAPPHKNPDAQFLPFVETITPQIEAMAGAAASELSRGGMKTKLDAGKIANAAGTAMIITSGTRFGPLSAIDRGERATLFEAAHAPVNAWKTWISGNLEPAGRLTVDAGAVKALKSGKSLLPAGVKEVDGDFERGDTVAVMNEDGREIARGLIAYDAADARKVAGHKSDEISAILGYDARAAMIHRNDLVVRAASDAKAA</sequence>
<dbReference type="EC" id="2.7.2.11" evidence="1"/>
<dbReference type="EMBL" id="CP000872">
    <property type="protein sequence ID" value="ABX62879.1"/>
    <property type="molecule type" value="Genomic_DNA"/>
</dbReference>
<dbReference type="RefSeq" id="WP_004684325.1">
    <property type="nucleotide sequence ID" value="NC_010103.1"/>
</dbReference>
<dbReference type="SMR" id="A9M881"/>
<dbReference type="GeneID" id="97533036"/>
<dbReference type="KEGG" id="bcs:BCAN_A1882"/>
<dbReference type="HOGENOM" id="CLU_025400_2_0_5"/>
<dbReference type="PhylomeDB" id="A9M881"/>
<dbReference type="UniPathway" id="UPA00098">
    <property type="reaction ID" value="UER00359"/>
</dbReference>
<dbReference type="Proteomes" id="UP000001385">
    <property type="component" value="Chromosome I"/>
</dbReference>
<dbReference type="GO" id="GO:0005829">
    <property type="term" value="C:cytosol"/>
    <property type="evidence" value="ECO:0007669"/>
    <property type="project" value="TreeGrafter"/>
</dbReference>
<dbReference type="GO" id="GO:0005524">
    <property type="term" value="F:ATP binding"/>
    <property type="evidence" value="ECO:0007669"/>
    <property type="project" value="UniProtKB-KW"/>
</dbReference>
<dbReference type="GO" id="GO:0004349">
    <property type="term" value="F:glutamate 5-kinase activity"/>
    <property type="evidence" value="ECO:0007669"/>
    <property type="project" value="UniProtKB-UniRule"/>
</dbReference>
<dbReference type="GO" id="GO:0003723">
    <property type="term" value="F:RNA binding"/>
    <property type="evidence" value="ECO:0007669"/>
    <property type="project" value="InterPro"/>
</dbReference>
<dbReference type="GO" id="GO:0055129">
    <property type="term" value="P:L-proline biosynthetic process"/>
    <property type="evidence" value="ECO:0007669"/>
    <property type="project" value="UniProtKB-UniRule"/>
</dbReference>
<dbReference type="CDD" id="cd04242">
    <property type="entry name" value="AAK_G5K_ProB"/>
    <property type="match status" value="1"/>
</dbReference>
<dbReference type="CDD" id="cd21157">
    <property type="entry name" value="PUA_G5K"/>
    <property type="match status" value="1"/>
</dbReference>
<dbReference type="FunFam" id="2.30.130.10:FF:000007">
    <property type="entry name" value="Glutamate 5-kinase"/>
    <property type="match status" value="1"/>
</dbReference>
<dbReference type="FunFam" id="3.40.1160.10:FF:000018">
    <property type="entry name" value="Glutamate 5-kinase"/>
    <property type="match status" value="1"/>
</dbReference>
<dbReference type="Gene3D" id="3.40.1160.10">
    <property type="entry name" value="Acetylglutamate kinase-like"/>
    <property type="match status" value="1"/>
</dbReference>
<dbReference type="Gene3D" id="2.30.130.10">
    <property type="entry name" value="PUA domain"/>
    <property type="match status" value="1"/>
</dbReference>
<dbReference type="HAMAP" id="MF_00456">
    <property type="entry name" value="ProB"/>
    <property type="match status" value="1"/>
</dbReference>
<dbReference type="InterPro" id="IPR036393">
    <property type="entry name" value="AceGlu_kinase-like_sf"/>
</dbReference>
<dbReference type="InterPro" id="IPR001048">
    <property type="entry name" value="Asp/Glu/Uridylate_kinase"/>
</dbReference>
<dbReference type="InterPro" id="IPR041739">
    <property type="entry name" value="G5K_ProB"/>
</dbReference>
<dbReference type="InterPro" id="IPR001057">
    <property type="entry name" value="Glu/AcGlu_kinase"/>
</dbReference>
<dbReference type="InterPro" id="IPR011529">
    <property type="entry name" value="Glu_5kinase"/>
</dbReference>
<dbReference type="InterPro" id="IPR005715">
    <property type="entry name" value="Glu_5kinase/COase_Synthase"/>
</dbReference>
<dbReference type="InterPro" id="IPR019797">
    <property type="entry name" value="Glutamate_5-kinase_CS"/>
</dbReference>
<dbReference type="InterPro" id="IPR002478">
    <property type="entry name" value="PUA"/>
</dbReference>
<dbReference type="InterPro" id="IPR015947">
    <property type="entry name" value="PUA-like_sf"/>
</dbReference>
<dbReference type="InterPro" id="IPR036974">
    <property type="entry name" value="PUA_sf"/>
</dbReference>
<dbReference type="NCBIfam" id="TIGR01027">
    <property type="entry name" value="proB"/>
    <property type="match status" value="1"/>
</dbReference>
<dbReference type="PANTHER" id="PTHR43654">
    <property type="entry name" value="GLUTAMATE 5-KINASE"/>
    <property type="match status" value="1"/>
</dbReference>
<dbReference type="PANTHER" id="PTHR43654:SF1">
    <property type="entry name" value="ISOPENTENYL PHOSPHATE KINASE"/>
    <property type="match status" value="1"/>
</dbReference>
<dbReference type="Pfam" id="PF00696">
    <property type="entry name" value="AA_kinase"/>
    <property type="match status" value="1"/>
</dbReference>
<dbReference type="Pfam" id="PF01472">
    <property type="entry name" value="PUA"/>
    <property type="match status" value="1"/>
</dbReference>
<dbReference type="PIRSF" id="PIRSF000729">
    <property type="entry name" value="GK"/>
    <property type="match status" value="1"/>
</dbReference>
<dbReference type="PRINTS" id="PR00474">
    <property type="entry name" value="GLU5KINASE"/>
</dbReference>
<dbReference type="SMART" id="SM00359">
    <property type="entry name" value="PUA"/>
    <property type="match status" value="1"/>
</dbReference>
<dbReference type="SUPFAM" id="SSF53633">
    <property type="entry name" value="Carbamate kinase-like"/>
    <property type="match status" value="1"/>
</dbReference>
<dbReference type="SUPFAM" id="SSF88697">
    <property type="entry name" value="PUA domain-like"/>
    <property type="match status" value="1"/>
</dbReference>
<dbReference type="PROSITE" id="PS00902">
    <property type="entry name" value="GLUTAMATE_5_KINASE"/>
    <property type="match status" value="1"/>
</dbReference>
<dbReference type="PROSITE" id="PS50890">
    <property type="entry name" value="PUA"/>
    <property type="match status" value="1"/>
</dbReference>
<evidence type="ECO:0000255" key="1">
    <source>
        <dbReference type="HAMAP-Rule" id="MF_00456"/>
    </source>
</evidence>
<name>PROB_BRUC2</name>
<accession>A9M881</accession>
<protein>
    <recommendedName>
        <fullName evidence="1">Glutamate 5-kinase</fullName>
        <ecNumber evidence="1">2.7.2.11</ecNumber>
    </recommendedName>
    <alternativeName>
        <fullName evidence="1">Gamma-glutamyl kinase</fullName>
        <shortName evidence="1">GK</shortName>
    </alternativeName>
</protein>
<organism>
    <name type="scientific">Brucella canis (strain ATCC 23365 / NCTC 10854 / RM-666)</name>
    <dbReference type="NCBI Taxonomy" id="483179"/>
    <lineage>
        <taxon>Bacteria</taxon>
        <taxon>Pseudomonadati</taxon>
        <taxon>Pseudomonadota</taxon>
        <taxon>Alphaproteobacteria</taxon>
        <taxon>Hyphomicrobiales</taxon>
        <taxon>Brucellaceae</taxon>
        <taxon>Brucella/Ochrobactrum group</taxon>
        <taxon>Brucella</taxon>
    </lineage>
</organism>
<reference key="1">
    <citation type="submission" date="2007-10" db="EMBL/GenBank/DDBJ databases">
        <title>Brucella canis ATCC 23365 whole genome shotgun sequencing project.</title>
        <authorList>
            <person name="Setubal J.C."/>
            <person name="Bowns C."/>
            <person name="Boyle S."/>
            <person name="Crasta O.R."/>
            <person name="Czar M.J."/>
            <person name="Dharmanolla C."/>
            <person name="Gillespie J.J."/>
            <person name="Kenyon R.W."/>
            <person name="Lu J."/>
            <person name="Mane S."/>
            <person name="Mohapatra S."/>
            <person name="Nagrani S."/>
            <person name="Purkayastha A."/>
            <person name="Rajasimha H.K."/>
            <person name="Shallom J.M."/>
            <person name="Shallom S."/>
            <person name="Shukla M."/>
            <person name="Snyder E.E."/>
            <person name="Sobral B.W."/>
            <person name="Wattam A.R."/>
            <person name="Will R."/>
            <person name="Williams K."/>
            <person name="Yoo H."/>
            <person name="Bruce D."/>
            <person name="Detter C."/>
            <person name="Munk C."/>
            <person name="Brettin T.S."/>
        </authorList>
    </citation>
    <scope>NUCLEOTIDE SEQUENCE [LARGE SCALE GENOMIC DNA]</scope>
    <source>
        <strain>ATCC 23365 / NCTC 10854 / RM-666</strain>
    </source>
</reference>